<dbReference type="EC" id="2.7.2.8" evidence="1"/>
<dbReference type="EMBL" id="CP000155">
    <property type="protein sequence ID" value="ABC27909.1"/>
    <property type="molecule type" value="Genomic_DNA"/>
</dbReference>
<dbReference type="SMR" id="Q2SN65"/>
<dbReference type="STRING" id="349521.HCH_01027"/>
<dbReference type="KEGG" id="hch:HCH_01027"/>
<dbReference type="eggNOG" id="COG0548">
    <property type="taxonomic scope" value="Bacteria"/>
</dbReference>
<dbReference type="HOGENOM" id="CLU_053680_0_0_6"/>
<dbReference type="UniPathway" id="UPA00068">
    <property type="reaction ID" value="UER00107"/>
</dbReference>
<dbReference type="Proteomes" id="UP000000238">
    <property type="component" value="Chromosome"/>
</dbReference>
<dbReference type="GO" id="GO:0005737">
    <property type="term" value="C:cytoplasm"/>
    <property type="evidence" value="ECO:0007669"/>
    <property type="project" value="UniProtKB-SubCell"/>
</dbReference>
<dbReference type="GO" id="GO:0003991">
    <property type="term" value="F:acetylglutamate kinase activity"/>
    <property type="evidence" value="ECO:0007669"/>
    <property type="project" value="UniProtKB-UniRule"/>
</dbReference>
<dbReference type="GO" id="GO:0005524">
    <property type="term" value="F:ATP binding"/>
    <property type="evidence" value="ECO:0007669"/>
    <property type="project" value="UniProtKB-UniRule"/>
</dbReference>
<dbReference type="GO" id="GO:0042450">
    <property type="term" value="P:arginine biosynthetic process via ornithine"/>
    <property type="evidence" value="ECO:0007669"/>
    <property type="project" value="UniProtKB-UniRule"/>
</dbReference>
<dbReference type="GO" id="GO:0006526">
    <property type="term" value="P:L-arginine biosynthetic process"/>
    <property type="evidence" value="ECO:0007669"/>
    <property type="project" value="UniProtKB-UniPathway"/>
</dbReference>
<dbReference type="CDD" id="cd04250">
    <property type="entry name" value="AAK_NAGK-C"/>
    <property type="match status" value="1"/>
</dbReference>
<dbReference type="FunFam" id="3.40.1160.10:FF:000004">
    <property type="entry name" value="Acetylglutamate kinase"/>
    <property type="match status" value="1"/>
</dbReference>
<dbReference type="Gene3D" id="3.40.1160.10">
    <property type="entry name" value="Acetylglutamate kinase-like"/>
    <property type="match status" value="1"/>
</dbReference>
<dbReference type="HAMAP" id="MF_00082">
    <property type="entry name" value="ArgB"/>
    <property type="match status" value="1"/>
</dbReference>
<dbReference type="InterPro" id="IPR036393">
    <property type="entry name" value="AceGlu_kinase-like_sf"/>
</dbReference>
<dbReference type="InterPro" id="IPR004662">
    <property type="entry name" value="AcgluKinase_fam"/>
</dbReference>
<dbReference type="InterPro" id="IPR037528">
    <property type="entry name" value="ArgB"/>
</dbReference>
<dbReference type="InterPro" id="IPR001048">
    <property type="entry name" value="Asp/Glu/Uridylate_kinase"/>
</dbReference>
<dbReference type="InterPro" id="IPR001057">
    <property type="entry name" value="Glu/AcGlu_kinase"/>
</dbReference>
<dbReference type="InterPro" id="IPR041727">
    <property type="entry name" value="NAGK-C"/>
</dbReference>
<dbReference type="NCBIfam" id="TIGR00761">
    <property type="entry name" value="argB"/>
    <property type="match status" value="1"/>
</dbReference>
<dbReference type="PANTHER" id="PTHR23342">
    <property type="entry name" value="N-ACETYLGLUTAMATE SYNTHASE"/>
    <property type="match status" value="1"/>
</dbReference>
<dbReference type="PANTHER" id="PTHR23342:SF0">
    <property type="entry name" value="N-ACETYLGLUTAMATE SYNTHASE, MITOCHONDRIAL"/>
    <property type="match status" value="1"/>
</dbReference>
<dbReference type="Pfam" id="PF00696">
    <property type="entry name" value="AA_kinase"/>
    <property type="match status" value="1"/>
</dbReference>
<dbReference type="PIRSF" id="PIRSF000728">
    <property type="entry name" value="NAGK"/>
    <property type="match status" value="1"/>
</dbReference>
<dbReference type="PRINTS" id="PR00474">
    <property type="entry name" value="GLU5KINASE"/>
</dbReference>
<dbReference type="SUPFAM" id="SSF53633">
    <property type="entry name" value="Carbamate kinase-like"/>
    <property type="match status" value="1"/>
</dbReference>
<protein>
    <recommendedName>
        <fullName evidence="1">Acetylglutamate kinase</fullName>
        <ecNumber evidence="1">2.7.2.8</ecNumber>
    </recommendedName>
    <alternativeName>
        <fullName evidence="1">N-acetyl-L-glutamate 5-phosphotransferase</fullName>
    </alternativeName>
    <alternativeName>
        <fullName evidence="1">NAG kinase</fullName>
        <shortName evidence="1">NAGK</shortName>
    </alternativeName>
</protein>
<proteinExistence type="inferred from homology"/>
<name>ARGB_HAHCH</name>
<feature type="chain" id="PRO_0000264713" description="Acetylglutamate kinase">
    <location>
        <begin position="1"/>
        <end position="302"/>
    </location>
</feature>
<feature type="binding site" evidence="1">
    <location>
        <begin position="67"/>
        <end position="68"/>
    </location>
    <ligand>
        <name>substrate</name>
    </ligand>
</feature>
<feature type="binding site" evidence="1">
    <location>
        <position position="89"/>
    </location>
    <ligand>
        <name>substrate</name>
    </ligand>
</feature>
<feature type="binding site" evidence="1">
    <location>
        <position position="194"/>
    </location>
    <ligand>
        <name>substrate</name>
    </ligand>
</feature>
<feature type="site" description="Transition state stabilizer" evidence="1">
    <location>
        <position position="32"/>
    </location>
</feature>
<feature type="site" description="Transition state stabilizer" evidence="1">
    <location>
        <position position="254"/>
    </location>
</feature>
<evidence type="ECO:0000255" key="1">
    <source>
        <dbReference type="HAMAP-Rule" id="MF_00082"/>
    </source>
</evidence>
<comment type="function">
    <text evidence="1">Catalyzes the ATP-dependent phosphorylation of N-acetyl-L-glutamate.</text>
</comment>
<comment type="catalytic activity">
    <reaction evidence="1">
        <text>N-acetyl-L-glutamate + ATP = N-acetyl-L-glutamyl 5-phosphate + ADP</text>
        <dbReference type="Rhea" id="RHEA:14629"/>
        <dbReference type="ChEBI" id="CHEBI:30616"/>
        <dbReference type="ChEBI" id="CHEBI:44337"/>
        <dbReference type="ChEBI" id="CHEBI:57936"/>
        <dbReference type="ChEBI" id="CHEBI:456216"/>
        <dbReference type="EC" id="2.7.2.8"/>
    </reaction>
</comment>
<comment type="pathway">
    <text evidence="1">Amino-acid biosynthesis; L-arginine biosynthesis; N(2)-acetyl-L-ornithine from L-glutamate: step 2/4.</text>
</comment>
<comment type="subcellular location">
    <subcellularLocation>
        <location evidence="1">Cytoplasm</location>
    </subcellularLocation>
</comment>
<comment type="similarity">
    <text evidence="1">Belongs to the acetylglutamate kinase family. ArgB subfamily.</text>
</comment>
<gene>
    <name evidence="1" type="primary">argB</name>
    <name type="ordered locus">HCH_01027</name>
</gene>
<accession>Q2SN65</accession>
<keyword id="KW-0028">Amino-acid biosynthesis</keyword>
<keyword id="KW-0055">Arginine biosynthesis</keyword>
<keyword id="KW-0067">ATP-binding</keyword>
<keyword id="KW-0963">Cytoplasm</keyword>
<keyword id="KW-0418">Kinase</keyword>
<keyword id="KW-0547">Nucleotide-binding</keyword>
<keyword id="KW-1185">Reference proteome</keyword>
<keyword id="KW-0808">Transferase</keyword>
<organism>
    <name type="scientific">Hahella chejuensis (strain KCTC 2396)</name>
    <dbReference type="NCBI Taxonomy" id="349521"/>
    <lineage>
        <taxon>Bacteria</taxon>
        <taxon>Pseudomonadati</taxon>
        <taxon>Pseudomonadota</taxon>
        <taxon>Gammaproteobacteria</taxon>
        <taxon>Oceanospirillales</taxon>
        <taxon>Hahellaceae</taxon>
        <taxon>Hahella</taxon>
    </lineage>
</organism>
<sequence length="302" mass="32027">MLDRDNALQVAAVLSKALPYIQRFAGKTIVIKYGGNAMTDEELKNSFARDVVMMKLVGINPIVVHGGGPQIGDLLQRLNIKSSFINGLRVTDSETMDVVEMVLGGSVNKDIVALINRNGGKAIGLTGKDANFITARKLEVTRATPDMQKPEIIDIGHVGEVTGVRKDIITMLTDSDCIPVIAPIGVGQDGASYNINADLVAGKVAEVLQAEKLMLLTNIAGLMNKEGKVLTGLSTKQVDELIADGTIHGGMLPKIECALSAVKNGVHSAHIIDGRVPHATLLEIFTDEGVGTLITRKGCDDA</sequence>
<reference key="1">
    <citation type="journal article" date="2005" name="Nucleic Acids Res.">
        <title>Genomic blueprint of Hahella chejuensis, a marine microbe producing an algicidal agent.</title>
        <authorList>
            <person name="Jeong H."/>
            <person name="Yim J.H."/>
            <person name="Lee C."/>
            <person name="Choi S.-H."/>
            <person name="Park Y.K."/>
            <person name="Yoon S.H."/>
            <person name="Hur C.-G."/>
            <person name="Kang H.-Y."/>
            <person name="Kim D."/>
            <person name="Lee H.H."/>
            <person name="Park K.H."/>
            <person name="Park S.-H."/>
            <person name="Park H.-S."/>
            <person name="Lee H.K."/>
            <person name="Oh T.K."/>
            <person name="Kim J.F."/>
        </authorList>
    </citation>
    <scope>NUCLEOTIDE SEQUENCE [LARGE SCALE GENOMIC DNA]</scope>
    <source>
        <strain>KCTC 2396</strain>
    </source>
</reference>